<gene>
    <name evidence="1" type="primary">rplK</name>
    <name type="ordered locus">CTA_0341</name>
</gene>
<dbReference type="EMBL" id="CP000051">
    <property type="protein sequence ID" value="AAX50579.1"/>
    <property type="molecule type" value="Genomic_DNA"/>
</dbReference>
<dbReference type="RefSeq" id="WP_009871666.1">
    <property type="nucleotide sequence ID" value="NC_007429.1"/>
</dbReference>
<dbReference type="SMR" id="Q3KM43"/>
<dbReference type="KEGG" id="cta:CTA_0341"/>
<dbReference type="HOGENOM" id="CLU_074237_2_0_0"/>
<dbReference type="Proteomes" id="UP000002532">
    <property type="component" value="Chromosome"/>
</dbReference>
<dbReference type="GO" id="GO:0022625">
    <property type="term" value="C:cytosolic large ribosomal subunit"/>
    <property type="evidence" value="ECO:0007669"/>
    <property type="project" value="TreeGrafter"/>
</dbReference>
<dbReference type="GO" id="GO:0070180">
    <property type="term" value="F:large ribosomal subunit rRNA binding"/>
    <property type="evidence" value="ECO:0007669"/>
    <property type="project" value="UniProtKB-UniRule"/>
</dbReference>
<dbReference type="GO" id="GO:0003735">
    <property type="term" value="F:structural constituent of ribosome"/>
    <property type="evidence" value="ECO:0007669"/>
    <property type="project" value="InterPro"/>
</dbReference>
<dbReference type="GO" id="GO:0006412">
    <property type="term" value="P:translation"/>
    <property type="evidence" value="ECO:0007669"/>
    <property type="project" value="UniProtKB-UniRule"/>
</dbReference>
<dbReference type="CDD" id="cd00349">
    <property type="entry name" value="Ribosomal_L11"/>
    <property type="match status" value="1"/>
</dbReference>
<dbReference type="FunFam" id="1.10.10.250:FF:000001">
    <property type="entry name" value="50S ribosomal protein L11"/>
    <property type="match status" value="1"/>
</dbReference>
<dbReference type="FunFam" id="3.30.1550.10:FF:000001">
    <property type="entry name" value="50S ribosomal protein L11"/>
    <property type="match status" value="1"/>
</dbReference>
<dbReference type="Gene3D" id="1.10.10.250">
    <property type="entry name" value="Ribosomal protein L11, C-terminal domain"/>
    <property type="match status" value="1"/>
</dbReference>
<dbReference type="Gene3D" id="3.30.1550.10">
    <property type="entry name" value="Ribosomal protein L11/L12, N-terminal domain"/>
    <property type="match status" value="1"/>
</dbReference>
<dbReference type="HAMAP" id="MF_00736">
    <property type="entry name" value="Ribosomal_uL11"/>
    <property type="match status" value="1"/>
</dbReference>
<dbReference type="InterPro" id="IPR000911">
    <property type="entry name" value="Ribosomal_uL11"/>
</dbReference>
<dbReference type="InterPro" id="IPR006519">
    <property type="entry name" value="Ribosomal_uL11_bac-typ"/>
</dbReference>
<dbReference type="InterPro" id="IPR020783">
    <property type="entry name" value="Ribosomal_uL11_C"/>
</dbReference>
<dbReference type="InterPro" id="IPR036769">
    <property type="entry name" value="Ribosomal_uL11_C_sf"/>
</dbReference>
<dbReference type="InterPro" id="IPR020785">
    <property type="entry name" value="Ribosomal_uL11_CS"/>
</dbReference>
<dbReference type="InterPro" id="IPR020784">
    <property type="entry name" value="Ribosomal_uL11_N"/>
</dbReference>
<dbReference type="InterPro" id="IPR036796">
    <property type="entry name" value="Ribosomal_uL11_N_sf"/>
</dbReference>
<dbReference type="NCBIfam" id="TIGR01632">
    <property type="entry name" value="L11_bact"/>
    <property type="match status" value="1"/>
</dbReference>
<dbReference type="PANTHER" id="PTHR11661">
    <property type="entry name" value="60S RIBOSOMAL PROTEIN L12"/>
    <property type="match status" value="1"/>
</dbReference>
<dbReference type="PANTHER" id="PTHR11661:SF1">
    <property type="entry name" value="LARGE RIBOSOMAL SUBUNIT PROTEIN UL11M"/>
    <property type="match status" value="1"/>
</dbReference>
<dbReference type="Pfam" id="PF00298">
    <property type="entry name" value="Ribosomal_L11"/>
    <property type="match status" value="1"/>
</dbReference>
<dbReference type="Pfam" id="PF03946">
    <property type="entry name" value="Ribosomal_L11_N"/>
    <property type="match status" value="1"/>
</dbReference>
<dbReference type="SMART" id="SM00649">
    <property type="entry name" value="RL11"/>
    <property type="match status" value="1"/>
</dbReference>
<dbReference type="SUPFAM" id="SSF54747">
    <property type="entry name" value="Ribosomal L11/L12e N-terminal domain"/>
    <property type="match status" value="1"/>
</dbReference>
<dbReference type="SUPFAM" id="SSF46906">
    <property type="entry name" value="Ribosomal protein L11, C-terminal domain"/>
    <property type="match status" value="1"/>
</dbReference>
<dbReference type="PROSITE" id="PS00359">
    <property type="entry name" value="RIBOSOMAL_L11"/>
    <property type="match status" value="1"/>
</dbReference>
<reference key="1">
    <citation type="journal article" date="2005" name="Infect. Immun.">
        <title>Comparative genomic analysis of Chlamydia trachomatis oculotropic and genitotropic strains.</title>
        <authorList>
            <person name="Carlson J.H."/>
            <person name="Porcella S.F."/>
            <person name="McClarty G."/>
            <person name="Caldwell H.D."/>
        </authorList>
    </citation>
    <scope>NUCLEOTIDE SEQUENCE [LARGE SCALE GENOMIC DNA]</scope>
    <source>
        <strain>ATCC VR-571B / DSM 19440 / HAR-13</strain>
    </source>
</reference>
<proteinExistence type="inferred from homology"/>
<protein>
    <recommendedName>
        <fullName evidence="1">Large ribosomal subunit protein uL11</fullName>
    </recommendedName>
    <alternativeName>
        <fullName evidence="2">50S ribosomal protein L11</fullName>
    </alternativeName>
</protein>
<feature type="chain" id="PRO_0000258135" description="Large ribosomal subunit protein uL11">
    <location>
        <begin position="1"/>
        <end position="141"/>
    </location>
</feature>
<organism>
    <name type="scientific">Chlamydia trachomatis serovar A (strain ATCC VR-571B / DSM 19440 / HAR-13)</name>
    <dbReference type="NCBI Taxonomy" id="315277"/>
    <lineage>
        <taxon>Bacteria</taxon>
        <taxon>Pseudomonadati</taxon>
        <taxon>Chlamydiota</taxon>
        <taxon>Chlamydiia</taxon>
        <taxon>Chlamydiales</taxon>
        <taxon>Chlamydiaceae</taxon>
        <taxon>Chlamydia/Chlamydophila group</taxon>
        <taxon>Chlamydia</taxon>
    </lineage>
</organism>
<sequence>MSNKKIIKIIKLQIPGGKANPAPPIGPALGAAGVNIMGFCKEFNAATQDRPGDLLPVVITVYSDKTFSFVMKQSPVSSLIKKALGLESGSKIPNRNKVGKLTRAQITVIAEQKMKDMDVVLLESAERMVEGTARSMGVDVE</sequence>
<name>RL11_CHLTA</name>
<keyword id="KW-0488">Methylation</keyword>
<keyword id="KW-0687">Ribonucleoprotein</keyword>
<keyword id="KW-0689">Ribosomal protein</keyword>
<keyword id="KW-0694">RNA-binding</keyword>
<keyword id="KW-0699">rRNA-binding</keyword>
<evidence type="ECO:0000255" key="1">
    <source>
        <dbReference type="HAMAP-Rule" id="MF_00736"/>
    </source>
</evidence>
<evidence type="ECO:0000305" key="2"/>
<accession>Q3KM43</accession>
<comment type="function">
    <text evidence="1">Forms part of the ribosomal stalk which helps the ribosome interact with GTP-bound translation factors.</text>
</comment>
<comment type="subunit">
    <text evidence="1">Part of the ribosomal stalk of the 50S ribosomal subunit. Interacts with L10 and the large rRNA to form the base of the stalk. L10 forms an elongated spine to which L12 dimers bind in a sequential fashion forming a multimeric L10(L12)X complex.</text>
</comment>
<comment type="PTM">
    <text evidence="1">One or more lysine residues are methylated.</text>
</comment>
<comment type="similarity">
    <text evidence="1">Belongs to the universal ribosomal protein uL11 family.</text>
</comment>